<sequence>MNALLSNPFKEGLRKGDTQIGLWLSSTTSYMAEIAATSGYDWLLIDGEHAPNTVQDLYHQLQAIAPYASQPVIRPIEGSKALIKQVLDIGAQTLLIPMVDTAEQARQVVSATRYPPLGQRGVGASVARAARWGRIDNYMAQANESLCLLVQVESKVALENLDAILEVEGIDGVFIGPADLSASLGYPDNAGHPEVQRIIESCIYRIRAAGKAAGFLAVDPAMAQKCLAWGANFVAVGVDTMLYTEALDSRLAMFKSVQSVSTAKRSY</sequence>
<feature type="chain" id="PRO_1000140398" description="2-keto-3-deoxy-L-rhamnonate aldolase">
    <location>
        <begin position="1"/>
        <end position="267"/>
    </location>
</feature>
<feature type="active site" description="Proton acceptor" evidence="1">
    <location>
        <position position="49"/>
    </location>
</feature>
<feature type="binding site" evidence="1">
    <location>
        <position position="151"/>
    </location>
    <ligand>
        <name>substrate</name>
    </ligand>
</feature>
<feature type="binding site" evidence="1">
    <location>
        <position position="153"/>
    </location>
    <ligand>
        <name>Mg(2+)</name>
        <dbReference type="ChEBI" id="CHEBI:18420"/>
    </ligand>
</feature>
<feature type="binding site" evidence="1">
    <location>
        <position position="178"/>
    </location>
    <ligand>
        <name>substrate</name>
    </ligand>
</feature>
<feature type="binding site" evidence="1">
    <location>
        <position position="179"/>
    </location>
    <ligand>
        <name>Mg(2+)</name>
        <dbReference type="ChEBI" id="CHEBI:18420"/>
    </ligand>
</feature>
<feature type="binding site" evidence="1">
    <location>
        <position position="179"/>
    </location>
    <ligand>
        <name>substrate</name>
    </ligand>
</feature>
<feature type="site" description="Transition state stabilizer" evidence="1">
    <location>
        <position position="74"/>
    </location>
</feature>
<feature type="site" description="Increases basicity of active site His" evidence="1">
    <location>
        <position position="88"/>
    </location>
</feature>
<comment type="function">
    <text evidence="1">Catalyzes the reversible retro-aldol cleavage of 2-keto-3-deoxy-L-rhamnonate (KDR) to pyruvate and lactaldehyde.</text>
</comment>
<comment type="catalytic activity">
    <reaction evidence="1">
        <text>2-dehydro-3-deoxy-L-rhamnonate = (S)-lactaldehyde + pyruvate</text>
        <dbReference type="Rhea" id="RHEA:25784"/>
        <dbReference type="ChEBI" id="CHEBI:15361"/>
        <dbReference type="ChEBI" id="CHEBI:18041"/>
        <dbReference type="ChEBI" id="CHEBI:58371"/>
        <dbReference type="EC" id="4.1.2.53"/>
    </reaction>
</comment>
<comment type="cofactor">
    <cofactor evidence="1">
        <name>Mg(2+)</name>
        <dbReference type="ChEBI" id="CHEBI:18420"/>
    </cofactor>
    <text evidence="1">Binds 1 Mg(2+) ion per subunit.</text>
</comment>
<comment type="subunit">
    <text evidence="1">Homohexamer.</text>
</comment>
<comment type="similarity">
    <text evidence="1">Belongs to the HpcH/HpaI aldolase family. KDR aldolase subfamily.</text>
</comment>
<organism>
    <name type="scientific">Salmonella enteritidis PT4 (strain P125109)</name>
    <dbReference type="NCBI Taxonomy" id="550537"/>
    <lineage>
        <taxon>Bacteria</taxon>
        <taxon>Pseudomonadati</taxon>
        <taxon>Pseudomonadota</taxon>
        <taxon>Gammaproteobacteria</taxon>
        <taxon>Enterobacterales</taxon>
        <taxon>Enterobacteriaceae</taxon>
        <taxon>Salmonella</taxon>
    </lineage>
</organism>
<gene>
    <name evidence="1" type="primary">rhmA</name>
    <name type="ordered locus">SEN2271</name>
</gene>
<protein>
    <recommendedName>
        <fullName evidence="1">2-keto-3-deoxy-L-rhamnonate aldolase</fullName>
        <shortName evidence="1">KDR aldolase</shortName>
        <ecNumber evidence="1">4.1.2.53</ecNumber>
    </recommendedName>
    <alternativeName>
        <fullName evidence="1">2-dehydro-3-deoxyrhamnonate aldolase</fullName>
    </alternativeName>
</protein>
<proteinExistence type="inferred from homology"/>
<accession>B5R262</accession>
<keyword id="KW-0456">Lyase</keyword>
<keyword id="KW-0460">Magnesium</keyword>
<keyword id="KW-0479">Metal-binding</keyword>
<name>RHMA_SALEP</name>
<evidence type="ECO:0000255" key="1">
    <source>
        <dbReference type="HAMAP-Rule" id="MF_01290"/>
    </source>
</evidence>
<reference key="1">
    <citation type="journal article" date="2008" name="Genome Res.">
        <title>Comparative genome analysis of Salmonella enteritidis PT4 and Salmonella gallinarum 287/91 provides insights into evolutionary and host adaptation pathways.</title>
        <authorList>
            <person name="Thomson N.R."/>
            <person name="Clayton D.J."/>
            <person name="Windhorst D."/>
            <person name="Vernikos G."/>
            <person name="Davidson S."/>
            <person name="Churcher C."/>
            <person name="Quail M.A."/>
            <person name="Stevens M."/>
            <person name="Jones M.A."/>
            <person name="Watson M."/>
            <person name="Barron A."/>
            <person name="Layton A."/>
            <person name="Pickard D."/>
            <person name="Kingsley R.A."/>
            <person name="Bignell A."/>
            <person name="Clark L."/>
            <person name="Harris B."/>
            <person name="Ormond D."/>
            <person name="Abdellah Z."/>
            <person name="Brooks K."/>
            <person name="Cherevach I."/>
            <person name="Chillingworth T."/>
            <person name="Woodward J."/>
            <person name="Norberczak H."/>
            <person name="Lord A."/>
            <person name="Arrowsmith C."/>
            <person name="Jagels K."/>
            <person name="Moule S."/>
            <person name="Mungall K."/>
            <person name="Saunders M."/>
            <person name="Whitehead S."/>
            <person name="Chabalgoity J.A."/>
            <person name="Maskell D."/>
            <person name="Humphreys T."/>
            <person name="Roberts M."/>
            <person name="Barrow P.A."/>
            <person name="Dougan G."/>
            <person name="Parkhill J."/>
        </authorList>
    </citation>
    <scope>NUCLEOTIDE SEQUENCE [LARGE SCALE GENOMIC DNA]</scope>
    <source>
        <strain>P125109</strain>
    </source>
</reference>
<dbReference type="EC" id="4.1.2.53" evidence="1"/>
<dbReference type="EMBL" id="AM933172">
    <property type="protein sequence ID" value="CAR33855.1"/>
    <property type="molecule type" value="Genomic_DNA"/>
</dbReference>
<dbReference type="SMR" id="B5R262"/>
<dbReference type="KEGG" id="set:SEN2271"/>
<dbReference type="HOGENOM" id="CLU_059964_1_0_6"/>
<dbReference type="Proteomes" id="UP000000613">
    <property type="component" value="Chromosome"/>
</dbReference>
<dbReference type="GO" id="GO:0005737">
    <property type="term" value="C:cytoplasm"/>
    <property type="evidence" value="ECO:0007669"/>
    <property type="project" value="TreeGrafter"/>
</dbReference>
<dbReference type="GO" id="GO:0106099">
    <property type="term" value="F:2-keto-3-deoxy-L-rhamnonate aldolase activity"/>
    <property type="evidence" value="ECO:0007669"/>
    <property type="project" value="UniProtKB-EC"/>
</dbReference>
<dbReference type="GO" id="GO:0000287">
    <property type="term" value="F:magnesium ion binding"/>
    <property type="evidence" value="ECO:0007669"/>
    <property type="project" value="UniProtKB-UniRule"/>
</dbReference>
<dbReference type="FunFam" id="3.20.20.60:FF:000004">
    <property type="entry name" value="5-keto-4-deoxy-D-glucarate aldolase"/>
    <property type="match status" value="1"/>
</dbReference>
<dbReference type="Gene3D" id="3.20.20.60">
    <property type="entry name" value="Phosphoenolpyruvate-binding domains"/>
    <property type="match status" value="1"/>
</dbReference>
<dbReference type="HAMAP" id="MF_01290">
    <property type="entry name" value="KDR_aldolase"/>
    <property type="match status" value="1"/>
</dbReference>
<dbReference type="InterPro" id="IPR005000">
    <property type="entry name" value="Aldolase/citrate-lyase_domain"/>
</dbReference>
<dbReference type="InterPro" id="IPR050251">
    <property type="entry name" value="HpcH-HpaI_aldolase"/>
</dbReference>
<dbReference type="InterPro" id="IPR023593">
    <property type="entry name" value="KDR_aldolase"/>
</dbReference>
<dbReference type="InterPro" id="IPR015813">
    <property type="entry name" value="Pyrv/PenolPyrv_kinase-like_dom"/>
</dbReference>
<dbReference type="InterPro" id="IPR040442">
    <property type="entry name" value="Pyrv_kinase-like_dom_sf"/>
</dbReference>
<dbReference type="NCBIfam" id="NF007521">
    <property type="entry name" value="PRK10128.1"/>
    <property type="match status" value="1"/>
</dbReference>
<dbReference type="PANTHER" id="PTHR30502">
    <property type="entry name" value="2-KETO-3-DEOXY-L-RHAMNONATE ALDOLASE"/>
    <property type="match status" value="1"/>
</dbReference>
<dbReference type="PANTHER" id="PTHR30502:SF5">
    <property type="entry name" value="2-KETO-3-DEOXY-L-RHAMNONATE ALDOLASE"/>
    <property type="match status" value="1"/>
</dbReference>
<dbReference type="Pfam" id="PF03328">
    <property type="entry name" value="HpcH_HpaI"/>
    <property type="match status" value="1"/>
</dbReference>
<dbReference type="SUPFAM" id="SSF51621">
    <property type="entry name" value="Phosphoenolpyruvate/pyruvate domain"/>
    <property type="match status" value="1"/>
</dbReference>